<sequence length="75" mass="8164">MGSFSIWHWLIVLVIIALVFGTKKLRNVGSDLGSAVKGFKEGMKDASADKPADQVTQQRVSDDTIDVQAKEKSNS</sequence>
<name>TATA_BORPE</name>
<comment type="function">
    <text evidence="1">Part of the twin-arginine translocation (Tat) system that transports large folded proteins containing a characteristic twin-arginine motif in their signal peptide across membranes. TatA could form the protein-conducting channel of the Tat system.</text>
</comment>
<comment type="subunit">
    <text evidence="1">The Tat system comprises two distinct complexes: a TatABC complex, containing multiple copies of TatA, TatB and TatC subunits, and a separate TatA complex, containing only TatA subunits. Substrates initially bind to the TatABC complex, which probably triggers association of the separate TatA complex to form the active translocon.</text>
</comment>
<comment type="subcellular location">
    <subcellularLocation>
        <location evidence="1">Cell inner membrane</location>
        <topology evidence="1">Single-pass membrane protein</topology>
    </subcellularLocation>
</comment>
<comment type="similarity">
    <text evidence="1">Belongs to the TatA/E family.</text>
</comment>
<organism>
    <name type="scientific">Bordetella pertussis (strain Tohama I / ATCC BAA-589 / NCTC 13251)</name>
    <dbReference type="NCBI Taxonomy" id="257313"/>
    <lineage>
        <taxon>Bacteria</taxon>
        <taxon>Pseudomonadati</taxon>
        <taxon>Pseudomonadota</taxon>
        <taxon>Betaproteobacteria</taxon>
        <taxon>Burkholderiales</taxon>
        <taxon>Alcaligenaceae</taxon>
        <taxon>Bordetella</taxon>
    </lineage>
</organism>
<gene>
    <name evidence="1" type="primary">tatA</name>
    <name type="ordered locus">BP3777</name>
</gene>
<protein>
    <recommendedName>
        <fullName evidence="1">Sec-independent protein translocase protein TatA</fullName>
    </recommendedName>
</protein>
<feature type="chain" id="PRO_1000044356" description="Sec-independent protein translocase protein TatA">
    <location>
        <begin position="1"/>
        <end position="75"/>
    </location>
</feature>
<feature type="transmembrane region" description="Helical" evidence="1">
    <location>
        <begin position="1"/>
        <end position="21"/>
    </location>
</feature>
<feature type="region of interest" description="Disordered" evidence="2">
    <location>
        <begin position="45"/>
        <end position="75"/>
    </location>
</feature>
<evidence type="ECO:0000255" key="1">
    <source>
        <dbReference type="HAMAP-Rule" id="MF_00236"/>
    </source>
</evidence>
<evidence type="ECO:0000256" key="2">
    <source>
        <dbReference type="SAM" id="MobiDB-lite"/>
    </source>
</evidence>
<keyword id="KW-0997">Cell inner membrane</keyword>
<keyword id="KW-1003">Cell membrane</keyword>
<keyword id="KW-0472">Membrane</keyword>
<keyword id="KW-0653">Protein transport</keyword>
<keyword id="KW-1185">Reference proteome</keyword>
<keyword id="KW-0811">Translocation</keyword>
<keyword id="KW-0812">Transmembrane</keyword>
<keyword id="KW-1133">Transmembrane helix</keyword>
<keyword id="KW-0813">Transport</keyword>
<proteinExistence type="inferred from homology"/>
<accession>Q7VSY2</accession>
<dbReference type="EMBL" id="BX640422">
    <property type="protein sequence ID" value="CAE44033.1"/>
    <property type="molecule type" value="Genomic_DNA"/>
</dbReference>
<dbReference type="RefSeq" id="NP_882278.1">
    <property type="nucleotide sequence ID" value="NC_002929.2"/>
</dbReference>
<dbReference type="RefSeq" id="WP_003815808.1">
    <property type="nucleotide sequence ID" value="NZ_CP039022.1"/>
</dbReference>
<dbReference type="SMR" id="Q7VSY2"/>
<dbReference type="STRING" id="257313.BP3777"/>
<dbReference type="PaxDb" id="257313-BP3777"/>
<dbReference type="GeneID" id="93206073"/>
<dbReference type="KEGG" id="bpe:BP3777"/>
<dbReference type="PATRIC" id="fig|257313.5.peg.4081"/>
<dbReference type="eggNOG" id="COG1826">
    <property type="taxonomic scope" value="Bacteria"/>
</dbReference>
<dbReference type="HOGENOM" id="CLU_086034_5_3_4"/>
<dbReference type="Proteomes" id="UP000002676">
    <property type="component" value="Chromosome"/>
</dbReference>
<dbReference type="GO" id="GO:0033281">
    <property type="term" value="C:TAT protein transport complex"/>
    <property type="evidence" value="ECO:0007669"/>
    <property type="project" value="UniProtKB-UniRule"/>
</dbReference>
<dbReference type="GO" id="GO:0008320">
    <property type="term" value="F:protein transmembrane transporter activity"/>
    <property type="evidence" value="ECO:0007669"/>
    <property type="project" value="UniProtKB-UniRule"/>
</dbReference>
<dbReference type="GO" id="GO:0043953">
    <property type="term" value="P:protein transport by the Tat complex"/>
    <property type="evidence" value="ECO:0007669"/>
    <property type="project" value="UniProtKB-UniRule"/>
</dbReference>
<dbReference type="Gene3D" id="1.20.5.3310">
    <property type="match status" value="1"/>
</dbReference>
<dbReference type="HAMAP" id="MF_00236">
    <property type="entry name" value="TatA_E"/>
    <property type="match status" value="1"/>
</dbReference>
<dbReference type="InterPro" id="IPR003369">
    <property type="entry name" value="TatA/B/E"/>
</dbReference>
<dbReference type="InterPro" id="IPR006312">
    <property type="entry name" value="TatA/E"/>
</dbReference>
<dbReference type="NCBIfam" id="NF002813">
    <property type="entry name" value="PRK02958.1"/>
    <property type="match status" value="1"/>
</dbReference>
<dbReference type="NCBIfam" id="TIGR01411">
    <property type="entry name" value="tatAE"/>
    <property type="match status" value="1"/>
</dbReference>
<dbReference type="PANTHER" id="PTHR42982">
    <property type="entry name" value="SEC-INDEPENDENT PROTEIN TRANSLOCASE PROTEIN TATA"/>
    <property type="match status" value="1"/>
</dbReference>
<dbReference type="PANTHER" id="PTHR42982:SF1">
    <property type="entry name" value="SEC-INDEPENDENT PROTEIN TRANSLOCASE PROTEIN TATA"/>
    <property type="match status" value="1"/>
</dbReference>
<dbReference type="Pfam" id="PF02416">
    <property type="entry name" value="TatA_B_E"/>
    <property type="match status" value="1"/>
</dbReference>
<reference key="1">
    <citation type="journal article" date="2003" name="Nat. Genet.">
        <title>Comparative analysis of the genome sequences of Bordetella pertussis, Bordetella parapertussis and Bordetella bronchiseptica.</title>
        <authorList>
            <person name="Parkhill J."/>
            <person name="Sebaihia M."/>
            <person name="Preston A."/>
            <person name="Murphy L.D."/>
            <person name="Thomson N.R."/>
            <person name="Harris D.E."/>
            <person name="Holden M.T.G."/>
            <person name="Churcher C.M."/>
            <person name="Bentley S.D."/>
            <person name="Mungall K.L."/>
            <person name="Cerdeno-Tarraga A.-M."/>
            <person name="Temple L."/>
            <person name="James K.D."/>
            <person name="Harris B."/>
            <person name="Quail M.A."/>
            <person name="Achtman M."/>
            <person name="Atkin R."/>
            <person name="Baker S."/>
            <person name="Basham D."/>
            <person name="Bason N."/>
            <person name="Cherevach I."/>
            <person name="Chillingworth T."/>
            <person name="Collins M."/>
            <person name="Cronin A."/>
            <person name="Davis P."/>
            <person name="Doggett J."/>
            <person name="Feltwell T."/>
            <person name="Goble A."/>
            <person name="Hamlin N."/>
            <person name="Hauser H."/>
            <person name="Holroyd S."/>
            <person name="Jagels K."/>
            <person name="Leather S."/>
            <person name="Moule S."/>
            <person name="Norberczak H."/>
            <person name="O'Neil S."/>
            <person name="Ormond D."/>
            <person name="Price C."/>
            <person name="Rabbinowitsch E."/>
            <person name="Rutter S."/>
            <person name="Sanders M."/>
            <person name="Saunders D."/>
            <person name="Seeger K."/>
            <person name="Sharp S."/>
            <person name="Simmonds M."/>
            <person name="Skelton J."/>
            <person name="Squares R."/>
            <person name="Squares S."/>
            <person name="Stevens K."/>
            <person name="Unwin L."/>
            <person name="Whitehead S."/>
            <person name="Barrell B.G."/>
            <person name="Maskell D.J."/>
        </authorList>
    </citation>
    <scope>NUCLEOTIDE SEQUENCE [LARGE SCALE GENOMIC DNA]</scope>
    <source>
        <strain>Tohama I / ATCC BAA-589 / NCTC 13251</strain>
    </source>
</reference>